<evidence type="ECO:0000255" key="1">
    <source>
        <dbReference type="HAMAP-Rule" id="MF_00527"/>
    </source>
</evidence>
<feature type="chain" id="PRO_0000265028" description="Putative 3-methyladenine DNA glycosylase">
    <location>
        <begin position="1"/>
        <end position="208"/>
    </location>
</feature>
<comment type="similarity">
    <text evidence="1">Belongs to the DNA glycosylase MPG family.</text>
</comment>
<sequence length="208" mass="23353">MNYTEFFTNRSTSEISKDLLGRTLSYNNGEEILSGTIVEAEAYVGVKDRAAHSYGGRRSPANEGLYRPGGSLYIYSQRQYFFFDVSCQEEGEPQGVLIRAIDPLTGIDTMIKNRSGKTGPLLTNGPGKMMQALGITSRKWDLVDLNDSPFDIDIDHKREIEEIVALPRVGINQSDPEWAQKKLRFIVSGNPYVSDIKKKDIKKNHGFI</sequence>
<reference key="1">
    <citation type="journal article" date="2004" name="Proc. Natl. Acad. Sci. U.S.A.">
        <title>The genome sequence of the probiotic intestinal bacterium Lactobacillus johnsonii NCC 533.</title>
        <authorList>
            <person name="Pridmore R.D."/>
            <person name="Berger B."/>
            <person name="Desiere F."/>
            <person name="Vilanova D."/>
            <person name="Barretto C."/>
            <person name="Pittet A.-C."/>
            <person name="Zwahlen M.-C."/>
            <person name="Rouvet M."/>
            <person name="Altermann E."/>
            <person name="Barrangou R."/>
            <person name="Mollet B."/>
            <person name="Mercenier A."/>
            <person name="Klaenhammer T."/>
            <person name="Arigoni F."/>
            <person name="Schell M.A."/>
        </authorList>
    </citation>
    <scope>NUCLEOTIDE SEQUENCE [LARGE SCALE GENOMIC DNA]</scope>
    <source>
        <strain>CNCM I-1225 / La1 / NCC 533</strain>
    </source>
</reference>
<name>3MGH_LACJO</name>
<keyword id="KW-0227">DNA damage</keyword>
<keyword id="KW-0234">DNA repair</keyword>
<keyword id="KW-0378">Hydrolase</keyword>
<accession>Q74LU5</accession>
<dbReference type="EC" id="3.2.2.-" evidence="1"/>
<dbReference type="EMBL" id="AE017198">
    <property type="protein sequence ID" value="AAS08070.1"/>
    <property type="molecule type" value="Genomic_DNA"/>
</dbReference>
<dbReference type="RefSeq" id="WP_011161321.1">
    <property type="nucleotide sequence ID" value="NC_005362.1"/>
</dbReference>
<dbReference type="SMR" id="Q74LU5"/>
<dbReference type="KEGG" id="ljo:LJ_0088"/>
<dbReference type="eggNOG" id="COG2094">
    <property type="taxonomic scope" value="Bacteria"/>
</dbReference>
<dbReference type="HOGENOM" id="CLU_060471_2_0_9"/>
<dbReference type="Proteomes" id="UP000000581">
    <property type="component" value="Chromosome"/>
</dbReference>
<dbReference type="GO" id="GO:0003905">
    <property type="term" value="F:alkylbase DNA N-glycosylase activity"/>
    <property type="evidence" value="ECO:0007669"/>
    <property type="project" value="InterPro"/>
</dbReference>
<dbReference type="GO" id="GO:0003677">
    <property type="term" value="F:DNA binding"/>
    <property type="evidence" value="ECO:0007669"/>
    <property type="project" value="InterPro"/>
</dbReference>
<dbReference type="GO" id="GO:0006284">
    <property type="term" value="P:base-excision repair"/>
    <property type="evidence" value="ECO:0007669"/>
    <property type="project" value="InterPro"/>
</dbReference>
<dbReference type="CDD" id="cd00540">
    <property type="entry name" value="AAG"/>
    <property type="match status" value="1"/>
</dbReference>
<dbReference type="FunFam" id="3.10.300.10:FF:000001">
    <property type="entry name" value="Putative 3-methyladenine DNA glycosylase"/>
    <property type="match status" value="1"/>
</dbReference>
<dbReference type="Gene3D" id="3.10.300.10">
    <property type="entry name" value="Methylpurine-DNA glycosylase (MPG)"/>
    <property type="match status" value="1"/>
</dbReference>
<dbReference type="HAMAP" id="MF_00527">
    <property type="entry name" value="3MGH"/>
    <property type="match status" value="1"/>
</dbReference>
<dbReference type="InterPro" id="IPR011034">
    <property type="entry name" value="Formyl_transferase-like_C_sf"/>
</dbReference>
<dbReference type="InterPro" id="IPR003180">
    <property type="entry name" value="MPG"/>
</dbReference>
<dbReference type="InterPro" id="IPR036995">
    <property type="entry name" value="MPG_sf"/>
</dbReference>
<dbReference type="NCBIfam" id="TIGR00567">
    <property type="entry name" value="3mg"/>
    <property type="match status" value="1"/>
</dbReference>
<dbReference type="PANTHER" id="PTHR10429">
    <property type="entry name" value="DNA-3-METHYLADENINE GLYCOSYLASE"/>
    <property type="match status" value="1"/>
</dbReference>
<dbReference type="PANTHER" id="PTHR10429:SF0">
    <property type="entry name" value="DNA-3-METHYLADENINE GLYCOSYLASE"/>
    <property type="match status" value="1"/>
</dbReference>
<dbReference type="Pfam" id="PF02245">
    <property type="entry name" value="Pur_DNA_glyco"/>
    <property type="match status" value="1"/>
</dbReference>
<dbReference type="SUPFAM" id="SSF50486">
    <property type="entry name" value="FMT C-terminal domain-like"/>
    <property type="match status" value="1"/>
</dbReference>
<proteinExistence type="inferred from homology"/>
<protein>
    <recommendedName>
        <fullName evidence="1">Putative 3-methyladenine DNA glycosylase</fullName>
        <ecNumber evidence="1">3.2.2.-</ecNumber>
    </recommendedName>
</protein>
<gene>
    <name type="ordered locus">LJ_0088</name>
</gene>
<organism>
    <name type="scientific">Lactobacillus johnsonii (strain CNCM I-12250 / La1 / NCC 533)</name>
    <dbReference type="NCBI Taxonomy" id="257314"/>
    <lineage>
        <taxon>Bacteria</taxon>
        <taxon>Bacillati</taxon>
        <taxon>Bacillota</taxon>
        <taxon>Bacilli</taxon>
        <taxon>Lactobacillales</taxon>
        <taxon>Lactobacillaceae</taxon>
        <taxon>Lactobacillus</taxon>
    </lineage>
</organism>